<protein>
    <recommendedName>
        <fullName evidence="1">L-lactate dehydrogenase</fullName>
        <shortName evidence="1">L-LDH</shortName>
        <ecNumber evidence="1">1.1.1.27</ecNumber>
    </recommendedName>
</protein>
<feature type="chain" id="PRO_0000168340" description="L-lactate dehydrogenase">
    <location>
        <begin position="1"/>
        <end position="314"/>
    </location>
</feature>
<feature type="active site" description="Proton acceptor" evidence="1">
    <location>
        <position position="179"/>
    </location>
</feature>
<feature type="binding site" evidence="1">
    <location>
        <position position="17"/>
    </location>
    <ligand>
        <name>NAD(+)</name>
        <dbReference type="ChEBI" id="CHEBI:57540"/>
    </ligand>
</feature>
<feature type="binding site" evidence="1">
    <location>
        <position position="38"/>
    </location>
    <ligand>
        <name>NAD(+)</name>
        <dbReference type="ChEBI" id="CHEBI:57540"/>
    </ligand>
</feature>
<feature type="binding site" evidence="1">
    <location>
        <position position="43"/>
    </location>
    <ligand>
        <name>NAD(+)</name>
        <dbReference type="ChEBI" id="CHEBI:57540"/>
    </ligand>
</feature>
<feature type="binding site" evidence="1">
    <location>
        <position position="69"/>
    </location>
    <ligand>
        <name>NAD(+)</name>
        <dbReference type="ChEBI" id="CHEBI:57540"/>
    </ligand>
</feature>
<feature type="binding site" evidence="1">
    <location>
        <begin position="83"/>
        <end position="84"/>
    </location>
    <ligand>
        <name>NAD(+)</name>
        <dbReference type="ChEBI" id="CHEBI:57540"/>
    </ligand>
</feature>
<feature type="binding site" evidence="1">
    <location>
        <position position="86"/>
    </location>
    <ligand>
        <name>substrate</name>
    </ligand>
</feature>
<feature type="binding site" evidence="1">
    <location>
        <position position="92"/>
    </location>
    <ligand>
        <name>substrate</name>
    </ligand>
</feature>
<feature type="binding site" evidence="1">
    <location>
        <position position="105"/>
    </location>
    <ligand>
        <name>NAD(+)</name>
        <dbReference type="ChEBI" id="CHEBI:57540"/>
    </ligand>
</feature>
<feature type="binding site" evidence="1">
    <location>
        <begin position="122"/>
        <end position="124"/>
    </location>
    <ligand>
        <name>NAD(+)</name>
        <dbReference type="ChEBI" id="CHEBI:57540"/>
    </ligand>
</feature>
<feature type="binding site" evidence="1">
    <location>
        <begin position="124"/>
        <end position="127"/>
    </location>
    <ligand>
        <name>substrate</name>
    </ligand>
</feature>
<feature type="binding site" evidence="1">
    <location>
        <position position="147"/>
    </location>
    <ligand>
        <name>NAD(+)</name>
        <dbReference type="ChEBI" id="CHEBI:57540"/>
    </ligand>
</feature>
<feature type="binding site" evidence="1">
    <location>
        <begin position="152"/>
        <end position="155"/>
    </location>
    <ligand>
        <name>substrate</name>
    </ligand>
</feature>
<feature type="binding site" evidence="1">
    <location>
        <position position="157"/>
    </location>
    <ligand>
        <name>beta-D-fructose 1,6-bisphosphate</name>
        <dbReference type="ChEBI" id="CHEBI:32966"/>
        <note>allosteric activator</note>
    </ligand>
</feature>
<feature type="binding site" evidence="1">
    <location>
        <position position="172"/>
    </location>
    <ligand>
        <name>beta-D-fructose 1,6-bisphosphate</name>
        <dbReference type="ChEBI" id="CHEBI:32966"/>
        <note>allosteric activator</note>
    </ligand>
</feature>
<feature type="binding site" evidence="1">
    <location>
        <position position="232"/>
    </location>
    <ligand>
        <name>substrate</name>
    </ligand>
</feature>
<feature type="modified residue" description="Phosphotyrosine" evidence="1">
    <location>
        <position position="223"/>
    </location>
</feature>
<accession>Q8NLN0</accession>
<proteinExistence type="inferred from homology"/>
<gene>
    <name evidence="1" type="primary">ldh</name>
    <name type="ordered locus">Cgl2911</name>
    <name type="ordered locus">cg3219</name>
</gene>
<name>LDH_CORGL</name>
<keyword id="KW-0021">Allosteric enzyme</keyword>
<keyword id="KW-0963">Cytoplasm</keyword>
<keyword id="KW-0520">NAD</keyword>
<keyword id="KW-0560">Oxidoreductase</keyword>
<keyword id="KW-0597">Phosphoprotein</keyword>
<keyword id="KW-1185">Reference proteome</keyword>
<dbReference type="EC" id="1.1.1.27" evidence="1"/>
<dbReference type="EMBL" id="BA000036">
    <property type="protein sequence ID" value="BAC00305.1"/>
    <property type="molecule type" value="Genomic_DNA"/>
</dbReference>
<dbReference type="EMBL" id="BX927156">
    <property type="protein sequence ID" value="CAF20933.1"/>
    <property type="molecule type" value="Genomic_DNA"/>
</dbReference>
<dbReference type="RefSeq" id="NP_602100.1">
    <property type="nucleotide sequence ID" value="NC_003450.3"/>
</dbReference>
<dbReference type="RefSeq" id="WP_011015483.1">
    <property type="nucleotide sequence ID" value="NC_006958.1"/>
</dbReference>
<dbReference type="SMR" id="Q8NLN0"/>
<dbReference type="STRING" id="196627.cg3219"/>
<dbReference type="KEGG" id="cgb:cg3219"/>
<dbReference type="KEGG" id="cgl:Cgl2911"/>
<dbReference type="PATRIC" id="fig|196627.13.peg.2840"/>
<dbReference type="eggNOG" id="COG0039">
    <property type="taxonomic scope" value="Bacteria"/>
</dbReference>
<dbReference type="HOGENOM" id="CLU_045401_1_1_11"/>
<dbReference type="OrthoDB" id="9802969at2"/>
<dbReference type="BioCyc" id="CORYNE:G18NG-12529-MONOMER"/>
<dbReference type="UniPathway" id="UPA00554">
    <property type="reaction ID" value="UER00611"/>
</dbReference>
<dbReference type="Proteomes" id="UP000000582">
    <property type="component" value="Chromosome"/>
</dbReference>
<dbReference type="Proteomes" id="UP000001009">
    <property type="component" value="Chromosome"/>
</dbReference>
<dbReference type="GO" id="GO:0005737">
    <property type="term" value="C:cytoplasm"/>
    <property type="evidence" value="ECO:0007669"/>
    <property type="project" value="UniProtKB-SubCell"/>
</dbReference>
<dbReference type="GO" id="GO:0004459">
    <property type="term" value="F:L-lactate dehydrogenase activity"/>
    <property type="evidence" value="ECO:0007669"/>
    <property type="project" value="UniProtKB-UniRule"/>
</dbReference>
<dbReference type="GO" id="GO:0006096">
    <property type="term" value="P:glycolytic process"/>
    <property type="evidence" value="ECO:0007669"/>
    <property type="project" value="UniProtKB-UniRule"/>
</dbReference>
<dbReference type="GO" id="GO:0006089">
    <property type="term" value="P:lactate metabolic process"/>
    <property type="evidence" value="ECO:0007669"/>
    <property type="project" value="TreeGrafter"/>
</dbReference>
<dbReference type="CDD" id="cd05291">
    <property type="entry name" value="HicDH_like"/>
    <property type="match status" value="1"/>
</dbReference>
<dbReference type="FunFam" id="3.40.50.720:FF:000018">
    <property type="entry name" value="Malate dehydrogenase"/>
    <property type="match status" value="1"/>
</dbReference>
<dbReference type="Gene3D" id="3.90.110.10">
    <property type="entry name" value="Lactate dehydrogenase/glycoside hydrolase, family 4, C-terminal"/>
    <property type="match status" value="1"/>
</dbReference>
<dbReference type="Gene3D" id="3.40.50.720">
    <property type="entry name" value="NAD(P)-binding Rossmann-like Domain"/>
    <property type="match status" value="1"/>
</dbReference>
<dbReference type="HAMAP" id="MF_00488">
    <property type="entry name" value="Lactate_dehydrog"/>
    <property type="match status" value="1"/>
</dbReference>
<dbReference type="InterPro" id="IPR001557">
    <property type="entry name" value="L-lactate/malate_DH"/>
</dbReference>
<dbReference type="InterPro" id="IPR011304">
    <property type="entry name" value="L-lactate_DH"/>
</dbReference>
<dbReference type="InterPro" id="IPR018177">
    <property type="entry name" value="L-lactate_DH_AS"/>
</dbReference>
<dbReference type="InterPro" id="IPR022383">
    <property type="entry name" value="Lactate/malate_DH_C"/>
</dbReference>
<dbReference type="InterPro" id="IPR001236">
    <property type="entry name" value="Lactate/malate_DH_N"/>
</dbReference>
<dbReference type="InterPro" id="IPR015955">
    <property type="entry name" value="Lactate_DH/Glyco_Ohase_4_C"/>
</dbReference>
<dbReference type="InterPro" id="IPR036291">
    <property type="entry name" value="NAD(P)-bd_dom_sf"/>
</dbReference>
<dbReference type="NCBIfam" id="TIGR01771">
    <property type="entry name" value="L-LDH-NAD"/>
    <property type="match status" value="1"/>
</dbReference>
<dbReference type="NCBIfam" id="NF000824">
    <property type="entry name" value="PRK00066.1"/>
    <property type="match status" value="1"/>
</dbReference>
<dbReference type="PANTHER" id="PTHR43128">
    <property type="entry name" value="L-2-HYDROXYCARBOXYLATE DEHYDROGENASE (NAD(P)(+))"/>
    <property type="match status" value="1"/>
</dbReference>
<dbReference type="PANTHER" id="PTHR43128:SF16">
    <property type="entry name" value="L-LACTATE DEHYDROGENASE"/>
    <property type="match status" value="1"/>
</dbReference>
<dbReference type="Pfam" id="PF02866">
    <property type="entry name" value="Ldh_1_C"/>
    <property type="match status" value="1"/>
</dbReference>
<dbReference type="Pfam" id="PF00056">
    <property type="entry name" value="Ldh_1_N"/>
    <property type="match status" value="1"/>
</dbReference>
<dbReference type="PIRSF" id="PIRSF000102">
    <property type="entry name" value="Lac_mal_DH"/>
    <property type="match status" value="1"/>
</dbReference>
<dbReference type="PRINTS" id="PR00086">
    <property type="entry name" value="LLDHDRGNASE"/>
</dbReference>
<dbReference type="SUPFAM" id="SSF56327">
    <property type="entry name" value="LDH C-terminal domain-like"/>
    <property type="match status" value="1"/>
</dbReference>
<dbReference type="SUPFAM" id="SSF51735">
    <property type="entry name" value="NAD(P)-binding Rossmann-fold domains"/>
    <property type="match status" value="1"/>
</dbReference>
<dbReference type="PROSITE" id="PS00064">
    <property type="entry name" value="L_LDH"/>
    <property type="match status" value="1"/>
</dbReference>
<organism>
    <name type="scientific">Corynebacterium glutamicum (strain ATCC 13032 / DSM 20300 / JCM 1318 / BCRC 11384 / CCUG 27702 / LMG 3730 / NBRC 12168 / NCIMB 10025 / NRRL B-2784 / 534)</name>
    <dbReference type="NCBI Taxonomy" id="196627"/>
    <lineage>
        <taxon>Bacteria</taxon>
        <taxon>Bacillati</taxon>
        <taxon>Actinomycetota</taxon>
        <taxon>Actinomycetes</taxon>
        <taxon>Mycobacteriales</taxon>
        <taxon>Corynebacteriaceae</taxon>
        <taxon>Corynebacterium</taxon>
    </lineage>
</organism>
<evidence type="ECO:0000255" key="1">
    <source>
        <dbReference type="HAMAP-Rule" id="MF_00488"/>
    </source>
</evidence>
<sequence>MKETVGNKIVLIGAGDVGVAYAYALINQGMADHLAIIDIDEKKLEGNVMDLNHGVVWADSRTRVTKGTYADCEDAAMVVICAGAAQKPGETRLQLVDKNVKIMKSIVGDVMDSGFDGIFLVASNPVDILTYAVWKFSGLEWNRVIGSGTVLDSARFRYMLGELYEVAPSSVHAYIIGEHGDTELPVLSSATIAGVSLSRMLDKDPELEGRLEKIFEDTRDAAYHIIDAKGSTSYGIGMGLARITRAILQNQDVAVPVSALLHGEYGEEDIYIGTPAVVNRRGIRRVVELEITDHEMERFKHSANTLREIQKQFF</sequence>
<comment type="function">
    <text evidence="1">Catalyzes the conversion of lactate to pyruvate.</text>
</comment>
<comment type="catalytic activity">
    <reaction evidence="1">
        <text>(S)-lactate + NAD(+) = pyruvate + NADH + H(+)</text>
        <dbReference type="Rhea" id="RHEA:23444"/>
        <dbReference type="ChEBI" id="CHEBI:15361"/>
        <dbReference type="ChEBI" id="CHEBI:15378"/>
        <dbReference type="ChEBI" id="CHEBI:16651"/>
        <dbReference type="ChEBI" id="CHEBI:57540"/>
        <dbReference type="ChEBI" id="CHEBI:57945"/>
        <dbReference type="EC" id="1.1.1.27"/>
    </reaction>
</comment>
<comment type="activity regulation">
    <text evidence="1">Allosterically activated by fructose 1,6-bisphosphate (FBP).</text>
</comment>
<comment type="pathway">
    <text evidence="1">Fermentation; pyruvate fermentation to lactate; (S)-lactate from pyruvate: step 1/1.</text>
</comment>
<comment type="subunit">
    <text evidence="1">Homotetramer.</text>
</comment>
<comment type="subcellular location">
    <subcellularLocation>
        <location evidence="1">Cytoplasm</location>
    </subcellularLocation>
</comment>
<comment type="similarity">
    <text evidence="1">Belongs to the LDH/MDH superfamily. LDH family.</text>
</comment>
<reference key="1">
    <citation type="journal article" date="2003" name="Appl. Microbiol. Biotechnol.">
        <title>The Corynebacterium glutamicum genome: features and impacts on biotechnological processes.</title>
        <authorList>
            <person name="Ikeda M."/>
            <person name="Nakagawa S."/>
        </authorList>
    </citation>
    <scope>NUCLEOTIDE SEQUENCE [LARGE SCALE GENOMIC DNA]</scope>
    <source>
        <strain>ATCC 13032 / DSM 20300 / JCM 1318 / BCRC 11384 / CCUG 27702 / LMG 3730 / NBRC 12168 / NCIMB 10025 / NRRL B-2784 / 534</strain>
    </source>
</reference>
<reference key="2">
    <citation type="journal article" date="2003" name="J. Biotechnol.">
        <title>The complete Corynebacterium glutamicum ATCC 13032 genome sequence and its impact on the production of L-aspartate-derived amino acids and vitamins.</title>
        <authorList>
            <person name="Kalinowski J."/>
            <person name="Bathe B."/>
            <person name="Bartels D."/>
            <person name="Bischoff N."/>
            <person name="Bott M."/>
            <person name="Burkovski A."/>
            <person name="Dusch N."/>
            <person name="Eggeling L."/>
            <person name="Eikmanns B.J."/>
            <person name="Gaigalat L."/>
            <person name="Goesmann A."/>
            <person name="Hartmann M."/>
            <person name="Huthmacher K."/>
            <person name="Kraemer R."/>
            <person name="Linke B."/>
            <person name="McHardy A.C."/>
            <person name="Meyer F."/>
            <person name="Moeckel B."/>
            <person name="Pfefferle W."/>
            <person name="Puehler A."/>
            <person name="Rey D.A."/>
            <person name="Rueckert C."/>
            <person name="Rupp O."/>
            <person name="Sahm H."/>
            <person name="Wendisch V.F."/>
            <person name="Wiegraebe I."/>
            <person name="Tauch A."/>
        </authorList>
    </citation>
    <scope>NUCLEOTIDE SEQUENCE [LARGE SCALE GENOMIC DNA]</scope>
    <source>
        <strain>ATCC 13032 / DSM 20300 / JCM 1318 / BCRC 11384 / CCUG 27702 / LMG 3730 / NBRC 12168 / NCIMB 10025 / NRRL B-2784 / 534</strain>
    </source>
</reference>